<proteinExistence type="evidence at protein level"/>
<gene>
    <name type="primary">GBF1</name>
    <name type="synonym">KIAA0248</name>
</gene>
<keyword id="KW-0025">Alternative splicing</keyword>
<keyword id="KW-0144">Charcot-Marie-Tooth disease</keyword>
<keyword id="KW-0963">Cytoplasm</keyword>
<keyword id="KW-0225">Disease variant</keyword>
<keyword id="KW-0333">Golgi apparatus</keyword>
<keyword id="KW-0344">Guanine-nucleotide releasing factor</keyword>
<keyword id="KW-0945">Host-virus interaction</keyword>
<keyword id="KW-0551">Lipid droplet</keyword>
<keyword id="KW-0446">Lipid-binding</keyword>
<keyword id="KW-0472">Membrane</keyword>
<keyword id="KW-0523">Neurodegeneration</keyword>
<keyword id="KW-0622">Neuropathy</keyword>
<keyword id="KW-0597">Phosphoprotein</keyword>
<keyword id="KW-0653">Protein transport</keyword>
<keyword id="KW-1267">Proteomics identification</keyword>
<keyword id="KW-1185">Reference proteome</keyword>
<keyword id="KW-0813">Transport</keyword>
<evidence type="ECO:0000250" key="1">
    <source>
        <dbReference type="UniProtKB" id="Q9R1D7"/>
    </source>
</evidence>
<evidence type="ECO:0000255" key="2">
    <source>
        <dbReference type="PROSITE-ProRule" id="PRU00189"/>
    </source>
</evidence>
<evidence type="ECO:0000256" key="3">
    <source>
        <dbReference type="SAM" id="MobiDB-lite"/>
    </source>
</evidence>
<evidence type="ECO:0000269" key="4">
    <source>
    </source>
</evidence>
<evidence type="ECO:0000269" key="5">
    <source>
    </source>
</evidence>
<evidence type="ECO:0000269" key="6">
    <source>
    </source>
</evidence>
<evidence type="ECO:0000269" key="7">
    <source>
    </source>
</evidence>
<evidence type="ECO:0000269" key="8">
    <source>
    </source>
</evidence>
<evidence type="ECO:0000269" key="9">
    <source>
    </source>
</evidence>
<evidence type="ECO:0000269" key="10">
    <source>
    </source>
</evidence>
<evidence type="ECO:0000269" key="11">
    <source>
    </source>
</evidence>
<evidence type="ECO:0000269" key="12">
    <source>
    </source>
</evidence>
<evidence type="ECO:0000269" key="13">
    <source>
    </source>
</evidence>
<evidence type="ECO:0000269" key="14">
    <source>
    </source>
</evidence>
<evidence type="ECO:0000269" key="15">
    <source>
    </source>
</evidence>
<evidence type="ECO:0000269" key="16">
    <source>
    </source>
</evidence>
<evidence type="ECO:0000269" key="17">
    <source>
    </source>
</evidence>
<evidence type="ECO:0000269" key="18">
    <source>
    </source>
</evidence>
<evidence type="ECO:0000269" key="19">
    <source>
    </source>
</evidence>
<evidence type="ECO:0000269" key="20">
    <source>
    </source>
</evidence>
<evidence type="ECO:0000269" key="21">
    <source>
    </source>
</evidence>
<evidence type="ECO:0000269" key="22">
    <source>
    </source>
</evidence>
<evidence type="ECO:0000269" key="23">
    <source>
    </source>
</evidence>
<evidence type="ECO:0000269" key="24">
    <source>
    </source>
</evidence>
<evidence type="ECO:0000269" key="25">
    <source>
    </source>
</evidence>
<evidence type="ECO:0000269" key="26">
    <source>
    </source>
</evidence>
<evidence type="ECO:0000305" key="27"/>
<evidence type="ECO:0000305" key="28">
    <source>
    </source>
</evidence>
<evidence type="ECO:0000305" key="29">
    <source>
    </source>
</evidence>
<evidence type="ECO:0000305" key="30">
    <source>
    </source>
</evidence>
<evidence type="ECO:0000305" key="31">
    <source>
    </source>
</evidence>
<evidence type="ECO:0000305" key="32">
    <source>
    </source>
</evidence>
<evidence type="ECO:0000305" key="33">
    <source>
    </source>
</evidence>
<evidence type="ECO:0007744" key="34">
    <source>
    </source>
</evidence>
<evidence type="ECO:0007744" key="35">
    <source>
    </source>
</evidence>
<evidence type="ECO:0007744" key="36">
    <source>
    </source>
</evidence>
<evidence type="ECO:0007744" key="37">
    <source>
    </source>
</evidence>
<evidence type="ECO:0007744" key="38">
    <source>
    </source>
</evidence>
<evidence type="ECO:0007744" key="39">
    <source>
    </source>
</evidence>
<evidence type="ECO:0007744" key="40">
    <source>
    </source>
</evidence>
<dbReference type="EMBL" id="AF068755">
    <property type="protein sequence ID" value="AAD15903.1"/>
    <property type="molecule type" value="mRNA"/>
</dbReference>
<dbReference type="EMBL" id="D87435">
    <property type="protein sequence ID" value="BAA13379.2"/>
    <property type="status" value="ALT_INIT"/>
    <property type="molecule type" value="mRNA"/>
</dbReference>
<dbReference type="EMBL" id="AK025330">
    <property type="status" value="NOT_ANNOTATED_CDS"/>
    <property type="molecule type" value="mRNA"/>
</dbReference>
<dbReference type="EMBL" id="AL121928">
    <property type="status" value="NOT_ANNOTATED_CDS"/>
    <property type="molecule type" value="Genomic_DNA"/>
</dbReference>
<dbReference type="EMBL" id="AL160011">
    <property type="status" value="NOT_ANNOTATED_CDS"/>
    <property type="molecule type" value="Genomic_DNA"/>
</dbReference>
<dbReference type="EMBL" id="AL356420">
    <property type="status" value="NOT_ANNOTATED_CDS"/>
    <property type="molecule type" value="Genomic_DNA"/>
</dbReference>
<dbReference type="EMBL" id="BC007941">
    <property type="protein sequence ID" value="AAH07941.2"/>
    <property type="molecule type" value="mRNA"/>
</dbReference>
<dbReference type="EMBL" id="BC117681">
    <property type="protein sequence ID" value="AAI17682.1"/>
    <property type="molecule type" value="mRNA"/>
</dbReference>
<dbReference type="EMBL" id="BC117682">
    <property type="protein sequence ID" value="AAI17683.1"/>
    <property type="molecule type" value="mRNA"/>
</dbReference>
<dbReference type="EMBL" id="BC014171">
    <property type="protein sequence ID" value="AAH14171.2"/>
    <property type="molecule type" value="mRNA"/>
</dbReference>
<dbReference type="CCDS" id="CCDS7533.1">
    <molecule id="Q92538-1"/>
</dbReference>
<dbReference type="CCDS" id="CCDS91330.1">
    <molecule id="Q92538-2"/>
</dbReference>
<dbReference type="CCDS" id="CCDS91331.1">
    <molecule id="Q92538-4"/>
</dbReference>
<dbReference type="CCDS" id="CCDS91333.1">
    <molecule id="Q92538-3"/>
</dbReference>
<dbReference type="RefSeq" id="NP_001186307.1">
    <molecule id="Q92538-2"/>
    <property type="nucleotide sequence ID" value="NM_001199378.2"/>
</dbReference>
<dbReference type="RefSeq" id="NP_001186308.1">
    <molecule id="Q92538-3"/>
    <property type="nucleotide sequence ID" value="NM_001199379.2"/>
</dbReference>
<dbReference type="RefSeq" id="NP_001364066.1">
    <molecule id="Q92538-4"/>
    <property type="nucleotide sequence ID" value="NM_001377137.1"/>
</dbReference>
<dbReference type="RefSeq" id="NP_001364070.1">
    <molecule id="Q92538-1"/>
    <property type="nucleotide sequence ID" value="NM_001377141.1"/>
</dbReference>
<dbReference type="RefSeq" id="NP_001378852.1">
    <molecule id="Q92538-2"/>
    <property type="nucleotide sequence ID" value="NM_001391923.1"/>
</dbReference>
<dbReference type="RefSeq" id="NP_001378853.1">
    <molecule id="Q92538-3"/>
    <property type="nucleotide sequence ID" value="NM_001391924.1"/>
</dbReference>
<dbReference type="RefSeq" id="NP_004184.1">
    <molecule id="Q92538-1"/>
    <property type="nucleotide sequence ID" value="NM_004193.3"/>
</dbReference>
<dbReference type="RefSeq" id="XP_005270318.1">
    <property type="nucleotide sequence ID" value="XM_005270261.1"/>
</dbReference>
<dbReference type="SMR" id="Q92538"/>
<dbReference type="BioGRID" id="114268">
    <property type="interactions" value="492"/>
</dbReference>
<dbReference type="FunCoup" id="Q92538">
    <property type="interactions" value="3870"/>
</dbReference>
<dbReference type="IntAct" id="Q92538">
    <property type="interactions" value="106"/>
</dbReference>
<dbReference type="MINT" id="Q92538"/>
<dbReference type="STRING" id="9606.ENSP00000359000"/>
<dbReference type="GlyCosmos" id="Q92538">
    <property type="glycosylation" value="1 site, 1 glycan"/>
</dbReference>
<dbReference type="GlyGen" id="Q92538">
    <property type="glycosylation" value="3 sites, 1 O-linked glycan (1 site)"/>
</dbReference>
<dbReference type="iPTMnet" id="Q92538"/>
<dbReference type="MetOSite" id="Q92538"/>
<dbReference type="PhosphoSitePlus" id="Q92538"/>
<dbReference type="SwissPalm" id="Q92538"/>
<dbReference type="BioMuta" id="GBF1"/>
<dbReference type="DMDM" id="13124260"/>
<dbReference type="jPOST" id="Q92538"/>
<dbReference type="MassIVE" id="Q92538"/>
<dbReference type="PaxDb" id="9606-ENSP00000359000"/>
<dbReference type="PeptideAtlas" id="Q92538"/>
<dbReference type="ProteomicsDB" id="75296"/>
<dbReference type="Pumba" id="Q92538"/>
<dbReference type="Antibodypedia" id="31405">
    <property type="antibodies" value="97 antibodies from 20 providers"/>
</dbReference>
<dbReference type="DNASU" id="8729"/>
<dbReference type="Ensembl" id="ENST00000369983.5">
    <molecule id="Q92538-4"/>
    <property type="protein sequence ID" value="ENSP00000359000.4"/>
    <property type="gene ID" value="ENSG00000107862.7"/>
</dbReference>
<dbReference type="Ensembl" id="ENST00000676513.1">
    <molecule id="Q92538-1"/>
    <property type="protein sequence ID" value="ENSP00000503207.1"/>
    <property type="gene ID" value="ENSG00000107862.7"/>
</dbReference>
<dbReference type="Ensembl" id="ENST00000676939.1">
    <molecule id="Q92538-1"/>
    <property type="protein sequence ID" value="ENSP00000503981.1"/>
    <property type="gene ID" value="ENSG00000107862.7"/>
</dbReference>
<dbReference type="Ensembl" id="ENST00000676993.1">
    <molecule id="Q92538-3"/>
    <property type="protein sequence ID" value="ENSP00000503918.1"/>
    <property type="gene ID" value="ENSG00000107862.7"/>
</dbReference>
<dbReference type="Ensembl" id="ENST00000677240.1">
    <molecule id="Q92538-2"/>
    <property type="protein sequence ID" value="ENSP00000503428.1"/>
    <property type="gene ID" value="ENSG00000107862.7"/>
</dbReference>
<dbReference type="GeneID" id="8729"/>
<dbReference type="KEGG" id="hsa:8729"/>
<dbReference type="MANE-Select" id="ENST00000369983.5">
    <property type="protein sequence ID" value="ENSP00000359000.4"/>
    <property type="RefSeq nucleotide sequence ID" value="NM_001377137.1"/>
    <property type="RefSeq protein sequence ID" value="NP_001364066.1"/>
</dbReference>
<dbReference type="UCSC" id="uc001kux.3">
    <molecule id="Q92538-4"/>
    <property type="organism name" value="human"/>
</dbReference>
<dbReference type="AGR" id="HGNC:4181"/>
<dbReference type="CTD" id="8729"/>
<dbReference type="DisGeNET" id="8729"/>
<dbReference type="GeneCards" id="GBF1"/>
<dbReference type="HGNC" id="HGNC:4181">
    <property type="gene designation" value="GBF1"/>
</dbReference>
<dbReference type="HPA" id="ENSG00000107862">
    <property type="expression patterns" value="Low tissue specificity"/>
</dbReference>
<dbReference type="MalaCards" id="GBF1"/>
<dbReference type="MIM" id="603698">
    <property type="type" value="gene"/>
</dbReference>
<dbReference type="MIM" id="606483">
    <property type="type" value="phenotype"/>
</dbReference>
<dbReference type="neXtProt" id="NX_Q92538"/>
<dbReference type="OpenTargets" id="ENSG00000107862"/>
<dbReference type="PharmGKB" id="PA28595"/>
<dbReference type="VEuPathDB" id="HostDB:ENSG00000107862"/>
<dbReference type="eggNOG" id="KOG0928">
    <property type="taxonomic scope" value="Eukaryota"/>
</dbReference>
<dbReference type="GeneTree" id="ENSGT00940000156925"/>
<dbReference type="HOGENOM" id="CLU_001204_2_0_1"/>
<dbReference type="InParanoid" id="Q92538"/>
<dbReference type="OrthoDB" id="10258608at2759"/>
<dbReference type="PAN-GO" id="Q92538">
    <property type="GO annotations" value="0 GO annotations based on evolutionary models"/>
</dbReference>
<dbReference type="PhylomeDB" id="Q92538"/>
<dbReference type="TreeFam" id="TF105934"/>
<dbReference type="PathwayCommons" id="Q92538"/>
<dbReference type="Reactome" id="R-HSA-199992">
    <property type="pathway name" value="trans-Golgi Network Vesicle Budding"/>
</dbReference>
<dbReference type="Reactome" id="R-HSA-5620916">
    <property type="pathway name" value="VxPx cargo-targeting to cilium"/>
</dbReference>
<dbReference type="Reactome" id="R-HSA-6807878">
    <property type="pathway name" value="COPI-mediated anterograde transport"/>
</dbReference>
<dbReference type="Reactome" id="R-HSA-6811434">
    <property type="pathway name" value="COPI-dependent Golgi-to-ER retrograde traffic"/>
</dbReference>
<dbReference type="SignaLink" id="Q92538"/>
<dbReference type="SIGNOR" id="Q92538"/>
<dbReference type="BioGRID-ORCS" id="8729">
    <property type="hits" value="735 hits in 1156 CRISPR screens"/>
</dbReference>
<dbReference type="ChiTaRS" id="GBF1">
    <property type="organism name" value="human"/>
</dbReference>
<dbReference type="GeneWiki" id="GBF1"/>
<dbReference type="GenomeRNAi" id="8729"/>
<dbReference type="Pharos" id="Q92538">
    <property type="development level" value="Tbio"/>
</dbReference>
<dbReference type="PRO" id="PR:Q92538"/>
<dbReference type="Proteomes" id="UP000005640">
    <property type="component" value="Chromosome 10"/>
</dbReference>
<dbReference type="RNAct" id="Q92538">
    <property type="molecule type" value="protein"/>
</dbReference>
<dbReference type="Bgee" id="ENSG00000107862">
    <property type="expression patterns" value="Expressed in colonic epithelium and 188 other cell types or tissues"/>
</dbReference>
<dbReference type="ExpressionAtlas" id="Q92538">
    <property type="expression patterns" value="baseline and differential"/>
</dbReference>
<dbReference type="GO" id="GO:0031252">
    <property type="term" value="C:cell leading edge"/>
    <property type="evidence" value="ECO:0000314"/>
    <property type="project" value="UniProtKB"/>
</dbReference>
<dbReference type="GO" id="GO:0005801">
    <property type="term" value="C:cis-Golgi network"/>
    <property type="evidence" value="ECO:0000314"/>
    <property type="project" value="UniProtKB"/>
</dbReference>
<dbReference type="GO" id="GO:0005829">
    <property type="term" value="C:cytosol"/>
    <property type="evidence" value="ECO:0000314"/>
    <property type="project" value="HPA"/>
</dbReference>
<dbReference type="GO" id="GO:0005788">
    <property type="term" value="C:endoplasmic reticulum lumen"/>
    <property type="evidence" value="ECO:0007669"/>
    <property type="project" value="Ensembl"/>
</dbReference>
<dbReference type="GO" id="GO:0005793">
    <property type="term" value="C:endoplasmic reticulum-Golgi intermediate compartment"/>
    <property type="evidence" value="ECO:0000314"/>
    <property type="project" value="UniProtKB"/>
</dbReference>
<dbReference type="GO" id="GO:0005794">
    <property type="term" value="C:Golgi apparatus"/>
    <property type="evidence" value="ECO:0000314"/>
    <property type="project" value="HPA"/>
</dbReference>
<dbReference type="GO" id="GO:0000139">
    <property type="term" value="C:Golgi membrane"/>
    <property type="evidence" value="ECO:0000304"/>
    <property type="project" value="Reactome"/>
</dbReference>
<dbReference type="GO" id="GO:0005795">
    <property type="term" value="C:Golgi stack"/>
    <property type="evidence" value="ECO:0007669"/>
    <property type="project" value="Ensembl"/>
</dbReference>
<dbReference type="GO" id="GO:0005811">
    <property type="term" value="C:lipid droplet"/>
    <property type="evidence" value="ECO:0007669"/>
    <property type="project" value="UniProtKB-SubCell"/>
</dbReference>
<dbReference type="GO" id="GO:0016020">
    <property type="term" value="C:membrane"/>
    <property type="evidence" value="ECO:0007005"/>
    <property type="project" value="UniProtKB"/>
</dbReference>
<dbReference type="GO" id="GO:0005777">
    <property type="term" value="C:peroxisome"/>
    <property type="evidence" value="ECO:0007669"/>
    <property type="project" value="Ensembl"/>
</dbReference>
<dbReference type="GO" id="GO:0005802">
    <property type="term" value="C:trans-Golgi network"/>
    <property type="evidence" value="ECO:0000314"/>
    <property type="project" value="UniProtKB"/>
</dbReference>
<dbReference type="GO" id="GO:0005085">
    <property type="term" value="F:guanyl-nucleotide exchange factor activity"/>
    <property type="evidence" value="ECO:0000304"/>
    <property type="project" value="Reactome"/>
</dbReference>
<dbReference type="GO" id="GO:0005547">
    <property type="term" value="F:phosphatidylinositol-3,4,5-trisphosphate binding"/>
    <property type="evidence" value="ECO:0000314"/>
    <property type="project" value="UniProtKB"/>
</dbReference>
<dbReference type="GO" id="GO:0080025">
    <property type="term" value="F:phosphatidylinositol-3,5-bisphosphate binding"/>
    <property type="evidence" value="ECO:0000314"/>
    <property type="project" value="UniProtKB"/>
</dbReference>
<dbReference type="GO" id="GO:0002263">
    <property type="term" value="P:cell activation involved in immune response"/>
    <property type="evidence" value="ECO:0000315"/>
    <property type="project" value="UniProtKB"/>
</dbReference>
<dbReference type="GO" id="GO:0098586">
    <property type="term" value="P:cellular response to virus"/>
    <property type="evidence" value="ECO:0000315"/>
    <property type="project" value="UniProtKB"/>
</dbReference>
<dbReference type="GO" id="GO:0060271">
    <property type="term" value="P:cilium assembly"/>
    <property type="evidence" value="ECO:0000304"/>
    <property type="project" value="Reactome"/>
</dbReference>
<dbReference type="GO" id="GO:0048205">
    <property type="term" value="P:COPI coating of Golgi vesicle"/>
    <property type="evidence" value="ECO:0000315"/>
    <property type="project" value="UniProtKB"/>
</dbReference>
<dbReference type="GO" id="GO:0006888">
    <property type="term" value="P:endoplasmic reticulum to Golgi vesicle-mediated transport"/>
    <property type="evidence" value="ECO:0000304"/>
    <property type="project" value="Reactome"/>
</dbReference>
<dbReference type="GO" id="GO:0097111">
    <property type="term" value="P:endoplasmic reticulum-Golgi intermediate compartment organization"/>
    <property type="evidence" value="ECO:0000315"/>
    <property type="project" value="UniProtKB"/>
</dbReference>
<dbReference type="GO" id="GO:0061162">
    <property type="term" value="P:establishment of monopolar cell polarity"/>
    <property type="evidence" value="ECO:0000315"/>
    <property type="project" value="UniProtKB"/>
</dbReference>
<dbReference type="GO" id="GO:0090166">
    <property type="term" value="P:Golgi disassembly"/>
    <property type="evidence" value="ECO:0000315"/>
    <property type="project" value="UniProtKB"/>
</dbReference>
<dbReference type="GO" id="GO:0007030">
    <property type="term" value="P:Golgi organization"/>
    <property type="evidence" value="ECO:0000315"/>
    <property type="project" value="UniProtKB"/>
</dbReference>
<dbReference type="GO" id="GO:0006895">
    <property type="term" value="P:Golgi to endosome transport"/>
    <property type="evidence" value="ECO:0000315"/>
    <property type="project" value="UniProtKB"/>
</dbReference>
<dbReference type="GO" id="GO:0030593">
    <property type="term" value="P:neutrophil chemotaxis"/>
    <property type="evidence" value="ECO:0000315"/>
    <property type="project" value="UniProtKB"/>
</dbReference>
<dbReference type="GO" id="GO:0006892">
    <property type="term" value="P:post-Golgi vesicle-mediated transport"/>
    <property type="evidence" value="ECO:0000304"/>
    <property type="project" value="Reactome"/>
</dbReference>
<dbReference type="GO" id="GO:0070973">
    <property type="term" value="P:protein localization to endoplasmic reticulum exit site"/>
    <property type="evidence" value="ECO:0000315"/>
    <property type="project" value="UniProtKB"/>
</dbReference>
<dbReference type="GO" id="GO:1903420">
    <property type="term" value="P:protein localization to endoplasmic reticulum tubular network"/>
    <property type="evidence" value="ECO:0000315"/>
    <property type="project" value="UniProtKB"/>
</dbReference>
<dbReference type="GO" id="GO:0034067">
    <property type="term" value="P:protein localization to Golgi apparatus"/>
    <property type="evidence" value="ECO:0000315"/>
    <property type="project" value="UniProtKB"/>
</dbReference>
<dbReference type="GO" id="GO:0015031">
    <property type="term" value="P:protein transport"/>
    <property type="evidence" value="ECO:0007669"/>
    <property type="project" value="UniProtKB-KW"/>
</dbReference>
<dbReference type="GO" id="GO:1903409">
    <property type="term" value="P:reactive oxygen species biosynthetic process"/>
    <property type="evidence" value="ECO:0000315"/>
    <property type="project" value="UniProtKB"/>
</dbReference>
<dbReference type="GO" id="GO:0032012">
    <property type="term" value="P:regulation of ARF protein signal transduction"/>
    <property type="evidence" value="ECO:0007669"/>
    <property type="project" value="InterPro"/>
</dbReference>
<dbReference type="GO" id="GO:0007346">
    <property type="term" value="P:regulation of mitotic cell cycle"/>
    <property type="evidence" value="ECO:0000315"/>
    <property type="project" value="UniProtKB"/>
</dbReference>
<dbReference type="GO" id="GO:2000008">
    <property type="term" value="P:regulation of protein localization to cell surface"/>
    <property type="evidence" value="ECO:0000315"/>
    <property type="project" value="UniProtKB"/>
</dbReference>
<dbReference type="GO" id="GO:0042147">
    <property type="term" value="P:retrograde transport, endosome to Golgi"/>
    <property type="evidence" value="ECO:0000315"/>
    <property type="project" value="UniProtKB"/>
</dbReference>
<dbReference type="GO" id="GO:0006890">
    <property type="term" value="P:retrograde vesicle-mediated transport, Golgi to endoplasmic reticulum"/>
    <property type="evidence" value="ECO:0000315"/>
    <property type="project" value="UniProtKB"/>
</dbReference>
<dbReference type="CDD" id="cd00171">
    <property type="entry name" value="Sec7"/>
    <property type="match status" value="1"/>
</dbReference>
<dbReference type="FunFam" id="1.10.1000.11:FF:000007">
    <property type="entry name" value="Golgi-specific brefeldin A-resistance guanine nucleotide exchange factor 1"/>
    <property type="match status" value="1"/>
</dbReference>
<dbReference type="FunFam" id="1.10.220.20:FF:000004">
    <property type="entry name" value="Golgi-specific brefeldin A-resistance guanine nucleotide exchange factor 1"/>
    <property type="match status" value="1"/>
</dbReference>
<dbReference type="Gene3D" id="1.10.220.20">
    <property type="match status" value="1"/>
</dbReference>
<dbReference type="Gene3D" id="1.10.1000.11">
    <property type="entry name" value="Arf Nucleotide-binding Site Opener,domain 2"/>
    <property type="match status" value="1"/>
</dbReference>
<dbReference type="InterPro" id="IPR016024">
    <property type="entry name" value="ARM-type_fold"/>
</dbReference>
<dbReference type="InterPro" id="IPR056604">
    <property type="entry name" value="GBF1-like_TPR"/>
</dbReference>
<dbReference type="InterPro" id="IPR032691">
    <property type="entry name" value="Mon2/Sec7/BIG1-like_HUS"/>
</dbReference>
<dbReference type="InterPro" id="IPR023394">
    <property type="entry name" value="Sec7_C_sf"/>
</dbReference>
<dbReference type="InterPro" id="IPR000904">
    <property type="entry name" value="Sec7_dom"/>
</dbReference>
<dbReference type="InterPro" id="IPR035999">
    <property type="entry name" value="Sec7_dom_sf"/>
</dbReference>
<dbReference type="PANTHER" id="PTHR10663:SF388">
    <property type="entry name" value="GOLGI-SPECIFIC BREFELDIN A-RESISTANCE GUANINE NUCLEOTIDE EXCHANGE FACTOR 1"/>
    <property type="match status" value="1"/>
</dbReference>
<dbReference type="PANTHER" id="PTHR10663">
    <property type="entry name" value="GUANYL-NUCLEOTIDE EXCHANGE FACTOR"/>
    <property type="match status" value="1"/>
</dbReference>
<dbReference type="Pfam" id="PF01369">
    <property type="entry name" value="Sec7"/>
    <property type="match status" value="1"/>
</dbReference>
<dbReference type="Pfam" id="PF12783">
    <property type="entry name" value="Sec7-like_HUS"/>
    <property type="match status" value="1"/>
</dbReference>
<dbReference type="Pfam" id="PF23325">
    <property type="entry name" value="TPR_28"/>
    <property type="match status" value="1"/>
</dbReference>
<dbReference type="SMART" id="SM00222">
    <property type="entry name" value="Sec7"/>
    <property type="match status" value="1"/>
</dbReference>
<dbReference type="SUPFAM" id="SSF48371">
    <property type="entry name" value="ARM repeat"/>
    <property type="match status" value="1"/>
</dbReference>
<dbReference type="SUPFAM" id="SSF48425">
    <property type="entry name" value="Sec7 domain"/>
    <property type="match status" value="1"/>
</dbReference>
<dbReference type="PROSITE" id="PS50190">
    <property type="entry name" value="SEC7"/>
    <property type="match status" value="1"/>
</dbReference>
<sequence length="1860" mass="206574">MVDKNIYIIQGEINIVVGAIKRNARWSTHTPLDEERDPLLHSFGHLKEVLNSITELSEIEPNVFLRPFLEVIRSEDTTGPITGLALTSVNKFLSYALIDPTHEGTAEGMENMADAVTHARFVGTDPASDEVVLMKILQVLRTLLLTPVGAHLTNESVCEIMQSCFRICFEMRLSELLRKSAEHTLVDMVQLLFTRLPQFKEEPKNYVGTNMKKLKMRAGGMSDSSKWKKQKRSPRPPRHMTKVTPGSELPTPNGTTLSSNLTGGMPFIDVPTPISSASSEAASAVVSPSTDSGLEFSSQTTSKEDLTDLEQPGSPGYSTATEPGSSELGVPEQPDLQQEGTHVEKSQSASVESIPEVLEECTSPADHSDSASVHDMDYVNPRGVRFTQSSQKEGTALVPYGLPCIRELFRFLISLTNPHDRHNSEVMIHMGLHLLTVALESAPVAQCQTLLGLIKDEMCRHLFQLLSIERLNLYAASLRVCFLLFESMREHLKFQMEMYIKKLMEIITVENPKMPYEMKEMALEAIVQLWRIPSFVTELYINYDCDYYCSNLFEELTKLLSKNAFPVSGQLYTTHLLSLDALLTVIDSTEAHCQAKVLNSLTQQEKKETARPSCEIVDGTREASNTERTASDGKAVGMASDIPGLHLPGGGRLPPEHGKSGCSDLEEAVDSGADKKFARKPPRFSCLLPDPRELIEIKNKKKLLITGTEQFNQKPKKGIQFLQEKGLLTIPMDNTEVAQWLRENPRLDKKMIGEFVSDRKNIDLLESFVSTFSFQGLRLDEALRLYLEAFRLPGEAPVIQRLLEAFTERWMNCNGSPFANSDACFSLAYAVIMLNTDQHNHNVRKQNAPMTLEEFRKNLKGVNGGKDFEQDILEDMYHAIKNEEIVMPEEQTGLVRENYVWNVLLHRGATPEGIFLRVPTASYDLDLFTMTWGPTIAALSYVFDKSLEETIIQKAISGFRKCAMISAHYGLSDVFDNLIISLCKFTALSSESIENLPSVFGSNPKAHIAAKTVFHLAHRHGDILREGWKNIMEAMLQLFRAQLLPKAMIEVEDFVDPNGKISLQREETPSNRGESTVLSFVSWLTLSGPEQSSVRGPSTENQEAKRVALECIKQCDPEKMITESKFLQLESLQELMKALVSVTPDEETYDEEDAAFCLEMLLRIVLENRDRVGCVWQTVRDHLYHLCVQAQDFCFLVERAVVGLLRLAIRLLRREEISAQVLLSLRILLLMKPSVLSRVSHQVAYGLHELLKTNAANIHSGDDWATLFTLLECIGSGVKPPAALQATARADAPDAGAQSDSELPSYHQNDVSLDRGYTSDSEVYTDHGRPGKIHRSATDADVVNSGWLVVGKDDVDNSKPGPSRPGPSPLINQYSLTVGLDLGPHDTKSLLKCVESLSFIVRDAAHITPDNFELCVKTLRIFVEASLNGGCKSQEKRGKSHKYDSKGNRFKKKSKEGSMLRRPRTSSQHASRGGQSDDDEDEGVPASYHTVSLQVSQDLLDLMHTLHTRAASIYSSWAEEQRHLETGGQKIEADSRTLWAHCWCPLLQGIACLCCDARRQVRMQALTYLQRALLVHDLQKLDALEWESCFNKVLFPLLTKLLENISPADVGGMEETRMRASTLLSKVFLQHLSPLLSLSTFAALWLTILDFMDKYMHAGSSDLLSEAIPESLKNMLLVMDTAEIFHSADARGGGPSALWEITWERIDCFLPHLRDELFKQTVIQDPMPMEPQGQKPLASAHLTSAAGDTRTPGHPPPPEIPSELGACDFEKPESPRAASSSSPGSPVASSPSRLSPTPDGPPPLAQPPLILQPLASPLQVGVPPMTLPIILNPALIEATSPVPLLATPRPTDPIPTSEVN</sequence>
<reference key="1">
    <citation type="journal article" date="1998" name="Genomics">
        <title>Human GBF1 is a ubiquitously expressed gene of the sec7 domain family mapping to 10q24.</title>
        <authorList>
            <person name="Mansour S.J."/>
            <person name="Herbrick J.-A."/>
            <person name="Scherer S.W."/>
            <person name="Melancon P."/>
        </authorList>
    </citation>
    <scope>NUCLEOTIDE SEQUENCE [MRNA] (ISOFORM 4)</scope>
</reference>
<reference key="2">
    <citation type="journal article" date="1996" name="DNA Res.">
        <title>Prediction of the coding sequences of unidentified human genes. VI. The coding sequences of 80 new genes (KIAA0201-KIAA0280) deduced by analysis of cDNA clones from cell line KG-1 and brain.</title>
        <authorList>
            <person name="Nagase T."/>
            <person name="Seki N."/>
            <person name="Ishikawa K."/>
            <person name="Ohira M."/>
            <person name="Kawarabayasi Y."/>
            <person name="Ohara O."/>
            <person name="Tanaka A."/>
            <person name="Kotani H."/>
            <person name="Miyajima N."/>
            <person name="Nomura N."/>
        </authorList>
    </citation>
    <scope>NUCLEOTIDE SEQUENCE [LARGE SCALE MRNA] (ISOFORM 4)</scope>
    <source>
        <tissue>Bone marrow</tissue>
    </source>
</reference>
<reference key="3">
    <citation type="journal article" date="2002" name="DNA Res.">
        <title>Construction of expression-ready cDNA clones for KIAA genes: manual curation of 330 KIAA cDNA clones.</title>
        <authorList>
            <person name="Nakajima D."/>
            <person name="Okazaki N."/>
            <person name="Yamakawa H."/>
            <person name="Kikuno R."/>
            <person name="Ohara O."/>
            <person name="Nagase T."/>
        </authorList>
    </citation>
    <scope>SEQUENCE REVISION</scope>
</reference>
<reference key="4">
    <citation type="journal article" date="2004" name="Nat. Genet.">
        <title>Complete sequencing and characterization of 21,243 full-length human cDNAs.</title>
        <authorList>
            <person name="Ota T."/>
            <person name="Suzuki Y."/>
            <person name="Nishikawa T."/>
            <person name="Otsuki T."/>
            <person name="Sugiyama T."/>
            <person name="Irie R."/>
            <person name="Wakamatsu A."/>
            <person name="Hayashi K."/>
            <person name="Sato H."/>
            <person name="Nagai K."/>
            <person name="Kimura K."/>
            <person name="Makita H."/>
            <person name="Sekine M."/>
            <person name="Obayashi M."/>
            <person name="Nishi T."/>
            <person name="Shibahara T."/>
            <person name="Tanaka T."/>
            <person name="Ishii S."/>
            <person name="Yamamoto J."/>
            <person name="Saito K."/>
            <person name="Kawai Y."/>
            <person name="Isono Y."/>
            <person name="Nakamura Y."/>
            <person name="Nagahari K."/>
            <person name="Murakami K."/>
            <person name="Yasuda T."/>
            <person name="Iwayanagi T."/>
            <person name="Wagatsuma M."/>
            <person name="Shiratori A."/>
            <person name="Sudo H."/>
            <person name="Hosoiri T."/>
            <person name="Kaku Y."/>
            <person name="Kodaira H."/>
            <person name="Kondo H."/>
            <person name="Sugawara M."/>
            <person name="Takahashi M."/>
            <person name="Kanda K."/>
            <person name="Yokoi T."/>
            <person name="Furuya T."/>
            <person name="Kikkawa E."/>
            <person name="Omura Y."/>
            <person name="Abe K."/>
            <person name="Kamihara K."/>
            <person name="Katsuta N."/>
            <person name="Sato K."/>
            <person name="Tanikawa M."/>
            <person name="Yamazaki M."/>
            <person name="Ninomiya K."/>
            <person name="Ishibashi T."/>
            <person name="Yamashita H."/>
            <person name="Murakawa K."/>
            <person name="Fujimori K."/>
            <person name="Tanai H."/>
            <person name="Kimata M."/>
            <person name="Watanabe M."/>
            <person name="Hiraoka S."/>
            <person name="Chiba Y."/>
            <person name="Ishida S."/>
            <person name="Ono Y."/>
            <person name="Takiguchi S."/>
            <person name="Watanabe S."/>
            <person name="Yosida M."/>
            <person name="Hotuta T."/>
            <person name="Kusano J."/>
            <person name="Kanehori K."/>
            <person name="Takahashi-Fujii A."/>
            <person name="Hara H."/>
            <person name="Tanase T.-O."/>
            <person name="Nomura Y."/>
            <person name="Togiya S."/>
            <person name="Komai F."/>
            <person name="Hara R."/>
            <person name="Takeuchi K."/>
            <person name="Arita M."/>
            <person name="Imose N."/>
            <person name="Musashino K."/>
            <person name="Yuuki H."/>
            <person name="Oshima A."/>
            <person name="Sasaki N."/>
            <person name="Aotsuka S."/>
            <person name="Yoshikawa Y."/>
            <person name="Matsunawa H."/>
            <person name="Ichihara T."/>
            <person name="Shiohata N."/>
            <person name="Sano S."/>
            <person name="Moriya S."/>
            <person name="Momiyama H."/>
            <person name="Satoh N."/>
            <person name="Takami S."/>
            <person name="Terashima Y."/>
            <person name="Suzuki O."/>
            <person name="Nakagawa S."/>
            <person name="Senoh A."/>
            <person name="Mizoguchi H."/>
            <person name="Goto Y."/>
            <person name="Shimizu F."/>
            <person name="Wakebe H."/>
            <person name="Hishigaki H."/>
            <person name="Watanabe T."/>
            <person name="Sugiyama A."/>
            <person name="Takemoto M."/>
            <person name="Kawakami B."/>
            <person name="Yamazaki M."/>
            <person name="Watanabe K."/>
            <person name="Kumagai A."/>
            <person name="Itakura S."/>
            <person name="Fukuzumi Y."/>
            <person name="Fujimori Y."/>
            <person name="Komiyama M."/>
            <person name="Tashiro H."/>
            <person name="Tanigami A."/>
            <person name="Fujiwara T."/>
            <person name="Ono T."/>
            <person name="Yamada K."/>
            <person name="Fujii Y."/>
            <person name="Ozaki K."/>
            <person name="Hirao M."/>
            <person name="Ohmori Y."/>
            <person name="Kawabata A."/>
            <person name="Hikiji T."/>
            <person name="Kobatake N."/>
            <person name="Inagaki H."/>
            <person name="Ikema Y."/>
            <person name="Okamoto S."/>
            <person name="Okitani R."/>
            <person name="Kawakami T."/>
            <person name="Noguchi S."/>
            <person name="Itoh T."/>
            <person name="Shigeta K."/>
            <person name="Senba T."/>
            <person name="Matsumura K."/>
            <person name="Nakajima Y."/>
            <person name="Mizuno T."/>
            <person name="Morinaga M."/>
            <person name="Sasaki M."/>
            <person name="Togashi T."/>
            <person name="Oyama M."/>
            <person name="Hata H."/>
            <person name="Watanabe M."/>
            <person name="Komatsu T."/>
            <person name="Mizushima-Sugano J."/>
            <person name="Satoh T."/>
            <person name="Shirai Y."/>
            <person name="Takahashi Y."/>
            <person name="Nakagawa K."/>
            <person name="Okumura K."/>
            <person name="Nagase T."/>
            <person name="Nomura N."/>
            <person name="Kikuchi H."/>
            <person name="Masuho Y."/>
            <person name="Yamashita R."/>
            <person name="Nakai K."/>
            <person name="Yada T."/>
            <person name="Nakamura Y."/>
            <person name="Ohara O."/>
            <person name="Isogai T."/>
            <person name="Sugano S."/>
        </authorList>
    </citation>
    <scope>NUCLEOTIDE SEQUENCE [LARGE SCALE MRNA] (ISOFORM 2)</scope>
</reference>
<reference key="5">
    <citation type="journal article" date="2004" name="Nature">
        <title>The DNA sequence and comparative analysis of human chromosome 10.</title>
        <authorList>
            <person name="Deloukas P."/>
            <person name="Earthrowl M.E."/>
            <person name="Grafham D.V."/>
            <person name="Rubenfield M."/>
            <person name="French L."/>
            <person name="Steward C.A."/>
            <person name="Sims S.K."/>
            <person name="Jones M.C."/>
            <person name="Searle S."/>
            <person name="Scott C."/>
            <person name="Howe K."/>
            <person name="Hunt S.E."/>
            <person name="Andrews T.D."/>
            <person name="Gilbert J.G.R."/>
            <person name="Swarbreck D."/>
            <person name="Ashurst J.L."/>
            <person name="Taylor A."/>
            <person name="Battles J."/>
            <person name="Bird C.P."/>
            <person name="Ainscough R."/>
            <person name="Almeida J.P."/>
            <person name="Ashwell R.I.S."/>
            <person name="Ambrose K.D."/>
            <person name="Babbage A.K."/>
            <person name="Bagguley C.L."/>
            <person name="Bailey J."/>
            <person name="Banerjee R."/>
            <person name="Bates K."/>
            <person name="Beasley H."/>
            <person name="Bray-Allen S."/>
            <person name="Brown A.J."/>
            <person name="Brown J.Y."/>
            <person name="Burford D.C."/>
            <person name="Burrill W."/>
            <person name="Burton J."/>
            <person name="Cahill P."/>
            <person name="Camire D."/>
            <person name="Carter N.P."/>
            <person name="Chapman J.C."/>
            <person name="Clark S.Y."/>
            <person name="Clarke G."/>
            <person name="Clee C.M."/>
            <person name="Clegg S."/>
            <person name="Corby N."/>
            <person name="Coulson A."/>
            <person name="Dhami P."/>
            <person name="Dutta I."/>
            <person name="Dunn M."/>
            <person name="Faulkner L."/>
            <person name="Frankish A."/>
            <person name="Frankland J.A."/>
            <person name="Garner P."/>
            <person name="Garnett J."/>
            <person name="Gribble S."/>
            <person name="Griffiths C."/>
            <person name="Grocock R."/>
            <person name="Gustafson E."/>
            <person name="Hammond S."/>
            <person name="Harley J.L."/>
            <person name="Hart E."/>
            <person name="Heath P.D."/>
            <person name="Ho T.P."/>
            <person name="Hopkins B."/>
            <person name="Horne J."/>
            <person name="Howden P.J."/>
            <person name="Huckle E."/>
            <person name="Hynds C."/>
            <person name="Johnson C."/>
            <person name="Johnson D."/>
            <person name="Kana A."/>
            <person name="Kay M."/>
            <person name="Kimberley A.M."/>
            <person name="Kershaw J.K."/>
            <person name="Kokkinaki M."/>
            <person name="Laird G.K."/>
            <person name="Lawlor S."/>
            <person name="Lee H.M."/>
            <person name="Leongamornlert D.A."/>
            <person name="Laird G."/>
            <person name="Lloyd C."/>
            <person name="Lloyd D.M."/>
            <person name="Loveland J."/>
            <person name="Lovell J."/>
            <person name="McLaren S."/>
            <person name="McLay K.E."/>
            <person name="McMurray A."/>
            <person name="Mashreghi-Mohammadi M."/>
            <person name="Matthews L."/>
            <person name="Milne S."/>
            <person name="Nickerson T."/>
            <person name="Nguyen M."/>
            <person name="Overton-Larty E."/>
            <person name="Palmer S.A."/>
            <person name="Pearce A.V."/>
            <person name="Peck A.I."/>
            <person name="Pelan S."/>
            <person name="Phillimore B."/>
            <person name="Porter K."/>
            <person name="Rice C.M."/>
            <person name="Rogosin A."/>
            <person name="Ross M.T."/>
            <person name="Sarafidou T."/>
            <person name="Sehra H.K."/>
            <person name="Shownkeen R."/>
            <person name="Skuce C.D."/>
            <person name="Smith M."/>
            <person name="Standring L."/>
            <person name="Sycamore N."/>
            <person name="Tester J."/>
            <person name="Thorpe A."/>
            <person name="Torcasso W."/>
            <person name="Tracey A."/>
            <person name="Tromans A."/>
            <person name="Tsolas J."/>
            <person name="Wall M."/>
            <person name="Walsh J."/>
            <person name="Wang H."/>
            <person name="Weinstock K."/>
            <person name="West A.P."/>
            <person name="Willey D.L."/>
            <person name="Whitehead S.L."/>
            <person name="Wilming L."/>
            <person name="Wray P.W."/>
            <person name="Young L."/>
            <person name="Chen Y."/>
            <person name="Lovering R.C."/>
            <person name="Moschonas N.K."/>
            <person name="Siebert R."/>
            <person name="Fechtel K."/>
            <person name="Bentley D."/>
            <person name="Durbin R.M."/>
            <person name="Hubbard T."/>
            <person name="Doucette-Stamm L."/>
            <person name="Beck S."/>
            <person name="Smith D.R."/>
            <person name="Rogers J."/>
        </authorList>
    </citation>
    <scope>NUCLEOTIDE SEQUENCE [LARGE SCALE GENOMIC DNA]</scope>
</reference>
<reference key="6">
    <citation type="journal article" date="2004" name="Genome Res.">
        <title>The status, quality, and expansion of the NIH full-length cDNA project: the Mammalian Gene Collection (MGC).</title>
        <authorList>
            <consortium name="The MGC Project Team"/>
        </authorList>
    </citation>
    <scope>NUCLEOTIDE SEQUENCE [LARGE SCALE MRNA] (ISOFORM 3)</scope>
    <source>
        <tissue>Kidney</tissue>
        <tissue>Muscle</tissue>
    </source>
</reference>
<reference key="7">
    <citation type="journal article" date="2002" name="Traffic">
        <title>GBF1, a guanine nucleotide exchange factor for ADP-ribosylation factors, is localized to the cis-Golgi and involved in membrane association of the COPI coat.</title>
        <authorList>
            <person name="Kawamoto K."/>
            <person name="Yoshida Y."/>
            <person name="Tamaki H."/>
            <person name="Torii S."/>
            <person name="Shinotsuka C."/>
            <person name="Yamashina S."/>
            <person name="Nakayama K."/>
        </authorList>
    </citation>
    <scope>FUNCTION</scope>
    <scope>SUBCELLULAR LOCATION</scope>
</reference>
<reference key="8">
    <citation type="journal article" date="2003" name="EMBO Rep.">
        <title>The membrane-tethering protein p115 interacts with GBF1, an ARF guanine-nucleotide-exchange factor.</title>
        <authorList>
            <person name="Garcia-Mata R."/>
            <person name="Sztul E."/>
        </authorList>
    </citation>
    <scope>INTERACTION WITH USO1</scope>
</reference>
<reference key="9">
    <citation type="journal article" date="2003" name="Mol. Biol. Cell">
        <title>ADP-ribosylation factor/COPI-dependent events at the endoplasmic reticulum-Golgi interface are regulated by the guanine nucleotide exchange factor GBF1.</title>
        <authorList>
            <person name="Garcia-Mata R."/>
            <person name="Szul T."/>
            <person name="Alvarez C."/>
            <person name="Sztul E."/>
        </authorList>
    </citation>
    <scope>FUNCTION</scope>
    <scope>SUBCELLULAR LOCATION</scope>
    <scope>MUTAGENESIS OF GLU-795</scope>
</reference>
<reference key="10">
    <citation type="journal article" date="2005" name="Mol. Biol. Cell">
        <title>Dynamics of GBF1, a Brefeldin A-sensitive Arf1 exchange factor at the Golgi.</title>
        <authorList>
            <person name="Niu T.K."/>
            <person name="Pfeifer A.C."/>
            <person name="Lippincott-Schwartz J."/>
            <person name="Jackson C.L."/>
        </authorList>
    </citation>
    <scope>FUNCTION</scope>
    <scope>SUBCELLULAR LOCATION</scope>
    <scope>INTERACTION WITH ARF1; ARF3; ARF4 AND ARF5</scope>
    <scope>ACTIVITY REGULATION</scope>
    <scope>MUTAGENESIS OF MET-833</scope>
</reference>
<reference key="11">
    <citation type="journal article" date="2005" name="Traffic">
        <title>Dissection of membrane dynamics of the ARF-guanine nucleotide exchange factor GBF1.</title>
        <authorList>
            <person name="Szul T."/>
            <person name="Garcia-Mata R."/>
            <person name="Brandon E."/>
            <person name="Shestopal S."/>
            <person name="Alvarez C."/>
            <person name="Sztul E."/>
        </authorList>
    </citation>
    <scope>SUBCELLULAR LOCATION</scope>
</reference>
<reference key="12">
    <citation type="journal article" date="2006" name="Cell">
        <title>Global, in vivo, and site-specific phosphorylation dynamics in signaling networks.</title>
        <authorList>
            <person name="Olsen J.V."/>
            <person name="Blagoev B."/>
            <person name="Gnad F."/>
            <person name="Macek B."/>
            <person name="Kumar C."/>
            <person name="Mortensen P."/>
            <person name="Mann M."/>
        </authorList>
    </citation>
    <scope>IDENTIFICATION BY MASS SPECTROMETRY [LARGE SCALE ANALYSIS]</scope>
    <source>
        <tissue>Cervix carcinoma</tissue>
    </source>
</reference>
<reference key="13">
    <citation type="journal article" date="2006" name="J. Cell Sci.">
        <title>GBF1, a cis-Golgi and VTCs-localized ARF-GEF, is implicated in ER-to-Golgi protein traffic.</title>
        <authorList>
            <person name="Zhao X."/>
            <person name="Claude A."/>
            <person name="Chun J."/>
            <person name="Shields D.J."/>
            <person name="Presley J.F."/>
            <person name="Melancon P."/>
        </authorList>
    </citation>
    <scope>FUNCTION</scope>
</reference>
<reference key="14">
    <citation type="journal article" date="2006" name="J. Virol.">
        <title>Effects of picornavirus 3A Proteins on Protein Transport and GBF1-dependent COP-I recruitment.</title>
        <authorList>
            <person name="Wessels E."/>
            <person name="Duijsings D."/>
            <person name="Lanke K.H."/>
            <person name="van Dooren S.H."/>
            <person name="Jackson C.L."/>
            <person name="Melchers W.J."/>
            <person name="van Kuppeveld F.J."/>
        </authorList>
    </citation>
    <scope>INTERACTION WITH POLIOVIRUS PROTEIN 3A (MICROBIAL INFECTION)</scope>
</reference>
<reference key="15">
    <citation type="journal article" date="2007" name="J. Biol. Chem.">
        <title>Interactions between conserved domains within homodimers in the BIG1, BIG2, and GBF1 Arf guanine nucleotide exchange factors.</title>
        <authorList>
            <person name="Ramaen O."/>
            <person name="Joubert A."/>
            <person name="Simister P."/>
            <person name="Belgareh-Touze N."/>
            <person name="Olivares-Sanchez M.C."/>
            <person name="Zeeh J.C."/>
            <person name="Chantalat S."/>
            <person name="Golinelli-Cohen M.P."/>
            <person name="Jackson C.L."/>
            <person name="Biou V."/>
            <person name="Cherfils J."/>
        </authorList>
    </citation>
    <scope>SUBUNIT</scope>
</reference>
<reference key="16">
    <citation type="journal article" date="2007" name="J. Cell Sci.">
        <title>Dissecting the role of the ARF guanine nucleotide exchange factor GBF1 in Golgi biogenesis and protein trafficking.</title>
        <authorList>
            <person name="Szul T."/>
            <person name="Grabski R."/>
            <person name="Lyons S."/>
            <person name="Morohashi Y."/>
            <person name="Shestopal S."/>
            <person name="Lowe M."/>
            <person name="Sztul E."/>
        </authorList>
    </citation>
    <scope>FUNCTION</scope>
    <scope>INTERACTION WITH ARF1 AND ARF4</scope>
</reference>
<reference key="17">
    <citation type="journal article" date="2007" name="Mol. Biol. Cell">
        <title>Rab1b interacts with GBF1 and modulates both ARF1 dynamics and COPI association.</title>
        <authorList>
            <person name="Monetta P."/>
            <person name="Slavin I."/>
            <person name="Romero N."/>
            <person name="Alvarez C."/>
        </authorList>
    </citation>
    <scope>INTERACTION WITH RAB1B</scope>
</reference>
<reference key="18">
    <citation type="journal article" date="2007" name="Traffic">
        <title>The Arf GEF GBF1 is required for GGA recruitment to Golgi membranes.</title>
        <authorList>
            <person name="Lefrancois S."/>
            <person name="McCormick P.J."/>
        </authorList>
    </citation>
    <scope>FUNCTION</scope>
    <scope>INTERACTION WITH GGA1; GGA2 AND GGA3</scope>
    <scope>MUTAGENESIS OF GLU-795</scope>
</reference>
<reference key="19">
    <citation type="journal article" date="2008" name="J. Biol. Chem.">
        <title>AMP-activated protein kinase phosphorylates Golgi-specific brefeldin A resistance factor 1 at Thr1337 to induce disassembly of Golgi apparatus.</title>
        <authorList>
            <person name="Miyamoto T."/>
            <person name="Oshiro N."/>
            <person name="Yoshino K."/>
            <person name="Nakashima A."/>
            <person name="Eguchi S."/>
            <person name="Takahashi M."/>
            <person name="Ono Y."/>
            <person name="Kikkawa U."/>
            <person name="Yonezawa K."/>
        </authorList>
    </citation>
    <scope>PHOSPHORYLATION AT THR-1338</scope>
    <scope>MUTAGENESIS OF THR-1338</scope>
</reference>
<reference key="20">
    <citation type="journal article" date="2008" name="J. Proteome Res.">
        <title>Phosphoproteome of resting human platelets.</title>
        <authorList>
            <person name="Zahedi R.P."/>
            <person name="Lewandrowski U."/>
            <person name="Wiesner J."/>
            <person name="Wortelkamp S."/>
            <person name="Moebius J."/>
            <person name="Schuetz C."/>
            <person name="Walter U."/>
            <person name="Gambaryan S."/>
            <person name="Sickmann A."/>
        </authorList>
    </citation>
    <scope>PHOSPHORYLATION [LARGE SCALE ANALYSIS] AT THR-508</scope>
    <scope>IDENTIFICATION BY MASS SPECTROMETRY [LARGE SCALE ANALYSIS]</scope>
    <source>
        <tissue>Platelet</tissue>
    </source>
</reference>
<reference key="21">
    <citation type="journal article" date="2008" name="Mol. Biol. Cell">
        <title>Distinct functions for Arf guanine nucleotide exchange factors at the Golgi complex: GBF1 and BIGs are required for assembly and maintenance of the Golgi stack and trans-Golgi network, respectively.</title>
        <authorList>
            <person name="Manolea F."/>
            <person name="Claude A."/>
            <person name="Chun J."/>
            <person name="Rosas J."/>
            <person name="Melancon P."/>
        </authorList>
    </citation>
    <scope>FUNCTION</scope>
</reference>
<reference key="22">
    <citation type="journal article" date="2008" name="Mol. Cell">
        <title>Kinase-selective enrichment enables quantitative phosphoproteomics of the kinome across the cell cycle.</title>
        <authorList>
            <person name="Daub H."/>
            <person name="Olsen J.V."/>
            <person name="Bairlein M."/>
            <person name="Gnad F."/>
            <person name="Oppermann F.S."/>
            <person name="Korner R."/>
            <person name="Greff Z."/>
            <person name="Keri G."/>
            <person name="Stemmann O."/>
            <person name="Mann M."/>
        </authorList>
    </citation>
    <scope>IDENTIFICATION BY MASS SPECTROMETRY [LARGE SCALE ANALYSIS]</scope>
    <source>
        <tissue>Cervix carcinoma</tissue>
    </source>
</reference>
<reference key="23">
    <citation type="journal article" date="2008" name="Proc. Natl. Acad. Sci. U.S.A.">
        <title>A quantitative atlas of mitotic phosphorylation.</title>
        <authorList>
            <person name="Dephoure N."/>
            <person name="Zhou C."/>
            <person name="Villen J."/>
            <person name="Beausoleil S.A."/>
            <person name="Bakalarski C.E."/>
            <person name="Elledge S.J."/>
            <person name="Gygi S.P."/>
        </authorList>
    </citation>
    <scope>PHOSPHORYLATION [LARGE SCALE ANALYSIS] AT SER-663 AND SER-1299</scope>
    <scope>IDENTIFICATION BY MASS SPECTROMETRY [LARGE SCALE ANALYSIS]</scope>
    <source>
        <tissue>Cervix carcinoma</tissue>
    </source>
</reference>
<reference key="24">
    <citation type="journal article" date="2009" name="Anal. Chem.">
        <title>Lys-N and trypsin cover complementary parts of the phosphoproteome in a refined SCX-based approach.</title>
        <authorList>
            <person name="Gauci S."/>
            <person name="Helbig A.O."/>
            <person name="Slijper M."/>
            <person name="Krijgsveld J."/>
            <person name="Heck A.J."/>
            <person name="Mohammed S."/>
        </authorList>
    </citation>
    <scope>IDENTIFICATION BY MASS SPECTROMETRY [LARGE SCALE ANALYSIS]</scope>
</reference>
<reference key="25">
    <citation type="journal article" date="2009" name="EMBO Rep.">
        <title>A COPI coat subunit interacts directly with an early-Golgi localized Arf exchange factor.</title>
        <authorList>
            <person name="Deng Y."/>
            <person name="Golinelli-Cohen M.P."/>
            <person name="Smirnova E."/>
            <person name="Jackson C.L."/>
        </authorList>
    </citation>
    <scope>FUNCTION</scope>
    <scope>INTERACTION WITH COPG1</scope>
    <scope>MUTAGENESIS OF ASP-544</scope>
</reference>
<reference key="26">
    <citation type="journal article" date="2009" name="J. Cell Sci.">
        <title>Coatomer-dependent protein delivery to lipid droplets.</title>
        <authorList>
            <person name="Soni K.G."/>
            <person name="Mardones G.A."/>
            <person name="Sougrat R."/>
            <person name="Smirnova E."/>
            <person name="Jackson C.L."/>
            <person name="Bonifacino J.S."/>
        </authorList>
    </citation>
    <scope>FUNCTION</scope>
</reference>
<reference key="27">
    <citation type="journal article" date="2009" name="Mol. Cell. Proteomics">
        <title>Large-scale proteomics analysis of the human kinome.</title>
        <authorList>
            <person name="Oppermann F.S."/>
            <person name="Gnad F."/>
            <person name="Olsen J.V."/>
            <person name="Hornberger R."/>
            <person name="Greff Z."/>
            <person name="Keri G."/>
            <person name="Mann M."/>
            <person name="Daub H."/>
        </authorList>
    </citation>
    <scope>IDENTIFICATION BY MASS SPECTROMETRY [LARGE SCALE ANALYSIS]</scope>
</reference>
<reference key="28">
    <citation type="journal article" date="2009" name="Sci. Signal.">
        <title>Quantitative phosphoproteomic analysis of T cell receptor signaling reveals system-wide modulation of protein-protein interactions.</title>
        <authorList>
            <person name="Mayya V."/>
            <person name="Lundgren D.H."/>
            <person name="Hwang S.-I."/>
            <person name="Rezaul K."/>
            <person name="Wu L."/>
            <person name="Eng J.K."/>
            <person name="Rodionov V."/>
            <person name="Han D.K."/>
        </authorList>
    </citation>
    <scope>PHOSPHORYLATION [LARGE SCALE ANALYSIS] AT SER-1299; TYR-1317; SER-1336 AND SER-1476</scope>
    <scope>IDENTIFICATION BY MASS SPECTROMETRY [LARGE SCALE ANALYSIS]</scope>
    <source>
        <tissue>Leukemic T-cell</tissue>
    </source>
</reference>
<reference key="29">
    <citation type="journal article" date="2010" name="Sci. Signal.">
        <title>Quantitative phosphoproteomics reveals widespread full phosphorylation site occupancy during mitosis.</title>
        <authorList>
            <person name="Olsen J.V."/>
            <person name="Vermeulen M."/>
            <person name="Santamaria A."/>
            <person name="Kumar C."/>
            <person name="Miller M.L."/>
            <person name="Jensen L.J."/>
            <person name="Gnad F."/>
            <person name="Cox J."/>
            <person name="Jensen T.S."/>
            <person name="Nigg E.A."/>
            <person name="Brunak S."/>
            <person name="Mann M."/>
        </authorList>
    </citation>
    <scope>PHOSPHORYLATION [LARGE SCALE ANALYSIS] AT SER-1321</scope>
    <scope>IDENTIFICATION BY MASS SPECTROMETRY [LARGE SCALE ANALYSIS]</scope>
    <source>
        <tissue>Cervix carcinoma</tissue>
    </source>
</reference>
<reference key="30">
    <citation type="journal article" date="2011" name="BMC Syst. Biol.">
        <title>Initial characterization of the human central proteome.</title>
        <authorList>
            <person name="Burkard T.R."/>
            <person name="Planyavsky M."/>
            <person name="Kaupe I."/>
            <person name="Breitwieser F.P."/>
            <person name="Buerckstuemmer T."/>
            <person name="Bennett K.L."/>
            <person name="Superti-Furga G."/>
            <person name="Colinge J."/>
        </authorList>
    </citation>
    <scope>IDENTIFICATION BY MASS SPECTROMETRY [LARGE SCALE ANALYSIS]</scope>
</reference>
<reference key="31">
    <citation type="journal article" date="2011" name="Cell Struct. Funct.">
        <title>GBF1-Arf-COPI-ArfGAP-mediated Golgi-to-ER transport involved in regulation of lipid homeostasis.</title>
        <authorList>
            <person name="Takashima K."/>
            <person name="Saitoh A."/>
            <person name="Hirose S."/>
            <person name="Nakai W."/>
            <person name="Kondo Y."/>
            <person name="Takasu Y."/>
            <person name="Kakeya H."/>
            <person name="Shin H.W."/>
            <person name="Nakayama K."/>
        </authorList>
    </citation>
    <scope>FUNCTION</scope>
</reference>
<reference key="32">
    <citation type="journal article" date="2011" name="PLoS ONE">
        <title>Interaction between the triglyceride lipase ATGL and the Arf1 activator GBF1.</title>
        <authorList>
            <person name="Ellong E.N."/>
            <person name="Soni K.G."/>
            <person name="Bui Q.T."/>
            <person name="Sougrat R."/>
            <person name="Golinelli-Cohen M.P."/>
            <person name="Jackson C.L."/>
        </authorList>
    </citation>
    <scope>INTERACTION WITH PNPLA2</scope>
    <scope>SUBCELLULAR LOCATION</scope>
    <scope>MUTAGENESIS OF ASP-544</scope>
</reference>
<reference key="33">
    <citation type="journal article" date="2011" name="Sci. Signal.">
        <title>System-wide temporal characterization of the proteome and phosphoproteome of human embryonic stem cell differentiation.</title>
        <authorList>
            <person name="Rigbolt K.T."/>
            <person name="Prokhorova T.A."/>
            <person name="Akimov V."/>
            <person name="Henningsen J."/>
            <person name="Johansen P.T."/>
            <person name="Kratchmarova I."/>
            <person name="Kassem M."/>
            <person name="Mann M."/>
            <person name="Olsen J.V."/>
            <person name="Blagoev B."/>
        </authorList>
    </citation>
    <scope>PHOSPHORYLATION [LARGE SCALE ANALYSIS] AT SER-1299</scope>
    <scope>IDENTIFICATION BY MASS SPECTROMETRY [LARGE SCALE ANALYSIS]</scope>
</reference>
<reference key="34">
    <citation type="journal article" date="2012" name="Mol. Biol. Cell">
        <title>GBF1 bears a novel phosphatidylinositol-phosphate binding module, BP3K, to link PI3Kgamma activity with Arf1 activation involved in GPCR-mediated neutrophil chemotaxis and superoxide production.</title>
        <authorList>
            <person name="Mazaki Y."/>
            <person name="Nishimura Y."/>
            <person name="Sabe H."/>
        </authorList>
    </citation>
    <scope>FUNCTION</scope>
    <scope>SUBCELLULAR LOCATION</scope>
    <scope>PHOSPHATIDYLINOSITOL-PHOSPHATE-BINDING</scope>
</reference>
<reference key="35">
    <citation type="journal article" date="2013" name="J. Biol. Chem.">
        <title>The Sec7 guanine nucleotide exchange factor GBF1 regulates membrane recruitment of BIG1 and BIG2 guanine nucleotide exchange factors to the trans-Golgi network (TGN).</title>
        <authorList>
            <person name="Lowery J."/>
            <person name="Szul T."/>
            <person name="Styers M."/>
            <person name="Holloway Z."/>
            <person name="Oorschot V."/>
            <person name="Klumperman J."/>
            <person name="Sztul E."/>
        </authorList>
    </citation>
    <scope>FUNCTION</scope>
    <scope>SUBCELLULAR LOCATION</scope>
</reference>
<reference key="36">
    <citation type="journal article" date="2013" name="J. Cell Sci.">
        <title>AMPK phosphorylates GBF1 for mitotic Golgi disassembly.</title>
        <authorList>
            <person name="Mao L."/>
            <person name="Li N."/>
            <person name="Guo Y."/>
            <person name="Xu X."/>
            <person name="Gao L."/>
            <person name="Xu Y."/>
            <person name="Zhou L."/>
            <person name="Liu W."/>
        </authorList>
    </citation>
    <scope>FUNCTION</scope>
    <scope>PHOSPHORYLATION BY AMPK</scope>
</reference>
<reference key="37">
    <citation type="journal article" date="2013" name="J. Proteome Res.">
        <title>Toward a comprehensive characterization of a human cancer cell phosphoproteome.</title>
        <authorList>
            <person name="Zhou H."/>
            <person name="Di Palma S."/>
            <person name="Preisinger C."/>
            <person name="Peng M."/>
            <person name="Polat A.N."/>
            <person name="Heck A.J."/>
            <person name="Mohammed S."/>
        </authorList>
    </citation>
    <scope>PHOSPHORYLATION [LARGE SCALE ANALYSIS] AT SER-663; SER-1319 AND SER-1785</scope>
    <scope>IDENTIFICATION BY MASS SPECTROMETRY [LARGE SCALE ANALYSIS]</scope>
    <source>
        <tissue>Cervix carcinoma</tissue>
        <tissue>Erythroleukemia</tissue>
    </source>
</reference>
<reference key="38">
    <citation type="journal article" date="2014" name="EMBO J.">
        <title>The small GTPase Arf1 modulates mitochondrial morphology and function.</title>
        <authorList>
            <person name="Ackema K.B."/>
            <person name="Hench J."/>
            <person name="Boeckler S."/>
            <person name="Wang S.C."/>
            <person name="Sauder U."/>
            <person name="Mergentaler H."/>
            <person name="Westermann B."/>
            <person name="Bard F."/>
            <person name="Frank S."/>
            <person name="Spang A."/>
        </authorList>
    </citation>
    <scope>FUNCTION</scope>
</reference>
<reference key="39">
    <citation type="journal article" date="2014" name="J. Cell Sci.">
        <title>Arf activation at the Golgi is modulated by feed-forward stimulation of the exchange factor GBF1.</title>
        <authorList>
            <person name="Quilty D."/>
            <person name="Gray F."/>
            <person name="Summerfeldt N."/>
            <person name="Cassel D."/>
            <person name="Melancon P."/>
        </authorList>
    </citation>
    <scope>FUNCTION</scope>
</reference>
<reference key="40">
    <citation type="journal article" date="2014" name="J. Proteomics">
        <title>An enzyme assisted RP-RPLC approach for in-depth analysis of human liver phosphoproteome.</title>
        <authorList>
            <person name="Bian Y."/>
            <person name="Song C."/>
            <person name="Cheng K."/>
            <person name="Dong M."/>
            <person name="Wang F."/>
            <person name="Huang J."/>
            <person name="Sun D."/>
            <person name="Wang L."/>
            <person name="Ye M."/>
            <person name="Zou H."/>
        </authorList>
    </citation>
    <scope>PHOSPHORYLATION [LARGE SCALE ANALYSIS] AT SER-350; SER-353; SER-1299; SER-1774 AND SER-1785</scope>
    <scope>IDENTIFICATION BY MASS SPECTROMETRY [LARGE SCALE ANALYSIS]</scope>
    <source>
        <tissue>Liver</tissue>
    </source>
</reference>
<reference key="41">
    <citation type="journal article" date="2019" name="Mol. Cell. Proteomics">
        <title>BioID performed on Golgi enriched fractions identify C10orf76 as aGBF1 Binding Protein essential for Golgi maintenance and secretion.</title>
        <authorList>
            <person name="Chan C.J."/>
            <person name="Le R."/>
            <person name="Burns K."/>
            <person name="Ahmed K."/>
            <person name="Coyaud E."/>
            <person name="Laurent E.M.N."/>
            <person name="Raught B."/>
            <person name="Melancon P."/>
        </authorList>
    </citation>
    <scope>INTERACTION WITH ARMH3</scope>
    <scope>SUBCELLULAR LOCATION</scope>
</reference>
<reference key="42">
    <citation type="journal article" date="2020" name="Am. J. Hum. Genet.">
        <title>De Novo and Inherited Variants in GBF1 are Associated with Axonal Neuropathy Caused by Golgi Fragmentation.</title>
        <authorList>
            <person name="Mendoza-Ferreira N."/>
            <person name="Karakaya M."/>
            <person name="Cengiz N."/>
            <person name="Beijer D."/>
            <person name="Brigatti K.W."/>
            <person name="Gonzaga-Jauregui C."/>
            <person name="Fuhrmann N."/>
            <person name="Hoelker I."/>
            <person name="Thelen M.P."/>
            <person name="Zetzsche S."/>
            <person name="Rombo R."/>
            <person name="Puffenberger E.G."/>
            <person name="De Jonghe P."/>
            <person name="Deconinck T."/>
            <person name="Zuchner S."/>
            <person name="Strauss K.A."/>
            <person name="Carson V."/>
            <person name="Schrank B."/>
            <person name="Wunderlich G."/>
            <person name="Baets J."/>
            <person name="Wirth B."/>
        </authorList>
    </citation>
    <scope>INVOLVEMENT IN CMT2GG</scope>
    <scope>VARIANTS CMT2GG TYR-983; VAL-1138; 1176-TRP--ASN-1860 DEL AND GLN-1462</scope>
</reference>
<accession>Q92538</accession>
<accession>A0A7P0RGV0</accession>
<accession>Q149P0</accession>
<accession>Q149P1</accession>
<accession>Q5VXX3</accession>
<accession>Q96CK6</accession>
<accession>Q96HZ3</accession>
<accession>Q9H473</accession>
<feature type="chain" id="PRO_0000120210" description="Golgi-specific brefeldin A-resistance guanine nucleotide exchange factor 1">
    <location>
        <begin position="1"/>
        <end position="1860"/>
    </location>
</feature>
<feature type="domain" description="SEC7" evidence="2">
    <location>
        <begin position="693"/>
        <end position="883"/>
    </location>
</feature>
<feature type="region of interest" description="Interaction with RAB1B" evidence="9">
    <location>
        <begin position="1"/>
        <end position="381"/>
    </location>
</feature>
<feature type="region of interest" description="DCB; DCB:DCB domain and DCB:HUS domain interaction" evidence="1">
    <location>
        <begin position="1"/>
        <end position="211"/>
    </location>
</feature>
<feature type="region of interest" description="Disordered" evidence="3">
    <location>
        <begin position="215"/>
        <end position="266"/>
    </location>
</feature>
<feature type="region of interest" description="Disordered" evidence="3">
    <location>
        <begin position="281"/>
        <end position="372"/>
    </location>
</feature>
<feature type="region of interest" description="HUS; DCB:HUS domain interaction" evidence="1">
    <location>
        <begin position="531"/>
        <end position="551"/>
    </location>
</feature>
<feature type="region of interest" description="Disordered" evidence="3">
    <location>
        <begin position="620"/>
        <end position="666"/>
    </location>
</feature>
<feature type="region of interest" description="Phosphatidylinositol-phosphate binding; required for translocation to the leading edge and for ARF1 activation upon GPCR signaling" evidence="18">
    <location>
        <begin position="887"/>
        <end position="1371"/>
    </location>
</feature>
<feature type="region of interest" description="Disordered" evidence="3">
    <location>
        <begin position="1285"/>
        <end position="1336"/>
    </location>
</feature>
<feature type="region of interest" description="Disordered" evidence="3">
    <location>
        <begin position="1351"/>
        <end position="1371"/>
    </location>
</feature>
<feature type="region of interest" description="Disordered" evidence="3">
    <location>
        <begin position="1431"/>
        <end position="1484"/>
    </location>
</feature>
<feature type="region of interest" description="Disordered" evidence="3">
    <location>
        <begin position="1726"/>
        <end position="1809"/>
    </location>
</feature>
<feature type="compositionally biased region" description="Basic residues" evidence="3">
    <location>
        <begin position="227"/>
        <end position="241"/>
    </location>
</feature>
<feature type="compositionally biased region" description="Polar residues" evidence="3">
    <location>
        <begin position="250"/>
        <end position="262"/>
    </location>
</feature>
<feature type="compositionally biased region" description="Polar residues" evidence="3">
    <location>
        <begin position="290"/>
        <end position="301"/>
    </location>
</feature>
<feature type="compositionally biased region" description="Polar residues" evidence="3">
    <location>
        <begin position="335"/>
        <end position="351"/>
    </location>
</feature>
<feature type="compositionally biased region" description="Basic and acidic residues" evidence="3">
    <location>
        <begin position="620"/>
        <end position="631"/>
    </location>
</feature>
<feature type="compositionally biased region" description="Low complexity" evidence="3">
    <location>
        <begin position="1285"/>
        <end position="1297"/>
    </location>
</feature>
<feature type="compositionally biased region" description="Polar residues" evidence="3">
    <location>
        <begin position="1298"/>
        <end position="1311"/>
    </location>
</feature>
<feature type="compositionally biased region" description="Basic and acidic residues" evidence="3">
    <location>
        <begin position="1433"/>
        <end position="1447"/>
    </location>
</feature>
<feature type="compositionally biased region" description="Polar residues" evidence="3">
    <location>
        <begin position="1465"/>
        <end position="1474"/>
    </location>
</feature>
<feature type="compositionally biased region" description="Low complexity" evidence="3">
    <location>
        <begin position="1775"/>
        <end position="1792"/>
    </location>
</feature>
<feature type="modified residue" description="Phosphoserine" evidence="40">
    <location>
        <position position="350"/>
    </location>
</feature>
<feature type="modified residue" description="Phosphoserine" evidence="40">
    <location>
        <position position="353"/>
    </location>
</feature>
<feature type="modified residue" description="Phosphothreonine" evidence="34">
    <location>
        <position position="508"/>
    </location>
</feature>
<feature type="modified residue" description="Phosphoserine" evidence="35 39">
    <location>
        <position position="663"/>
    </location>
</feature>
<feature type="modified residue" description="Phosphoserine" evidence="35 36 38 40">
    <location>
        <position position="1299"/>
    </location>
</feature>
<feature type="modified residue" description="Phosphotyrosine" evidence="36">
    <location>
        <position position="1317"/>
    </location>
</feature>
<feature type="modified residue" description="Phosphoserine" evidence="39">
    <location>
        <position position="1319"/>
    </location>
</feature>
<feature type="modified residue" description="Phosphoserine" evidence="37">
    <location>
        <position position="1321"/>
    </location>
</feature>
<feature type="modified residue" description="Phosphoserine" evidence="36">
    <location>
        <position position="1336"/>
    </location>
</feature>
<feature type="modified residue" description="Phosphothreonine; by AMPK" evidence="13">
    <location>
        <position position="1338"/>
    </location>
</feature>
<feature type="modified residue" description="Phosphoserine" evidence="36">
    <location>
        <position position="1476"/>
    </location>
</feature>
<feature type="modified residue" description="Phosphoserine" evidence="40">
    <location>
        <position position="1774"/>
    </location>
</feature>
<feature type="modified residue" description="Phosphoserine" evidence="39 40">
    <location>
        <position position="1785"/>
    </location>
</feature>
<feature type="splice variant" id="VSP_062172" description="In isoform 4 and isoform 3." evidence="25 26">
    <original>QQ</original>
    <variation>Q</variation>
    <location>
        <begin position="337"/>
        <end position="338"/>
    </location>
</feature>
<feature type="splice variant" id="VSP_057523" description="In isoform 2 and isoform 3.">
    <location>
        <begin position="1495"/>
        <end position="1498"/>
    </location>
</feature>
<feature type="sequence variant" id="VAR_088570" description="In CMT2GG; uncertain significance; dbSNP:rs2060050669." evidence="24">
    <original>C</original>
    <variation>Y</variation>
    <location>
        <position position="983"/>
    </location>
</feature>
<feature type="sequence variant" id="VAR_088571" description="In CMT2GG; uncertain significance; dbSNP:rs1299997613." evidence="24">
    <original>A</original>
    <variation>V</variation>
    <location>
        <position position="1138"/>
    </location>
</feature>
<feature type="sequence variant" id="VAR_088572" description="In CMT2GG; likely pathogenic; dbSNP:rs2060161763." evidence="24">
    <location>
        <begin position="1176"/>
        <end position="1860"/>
    </location>
</feature>
<feature type="sequence variant" id="VAR_088573" description="In CMT2GG; uncertain significance; dbSNP:rs2060541274." evidence="24">
    <original>R</original>
    <variation>Q</variation>
    <location>
        <position position="1462"/>
    </location>
</feature>
<feature type="sequence variant" id="VAR_051926" description="In dbSNP:rs11191274.">
    <original>G</original>
    <variation>S</variation>
    <location>
        <position position="1694"/>
    </location>
</feature>
<feature type="mutagenesis site" description="Increases interaction with COPG1 and PNPLA2." evidence="14 16">
    <original>D</original>
    <variation>A</variation>
    <location>
        <position position="544"/>
    </location>
</feature>
<feature type="mutagenesis site" description="Inhibits Golgi membrane recruitment of GGA1, GGA2 and GGA3; generates misprocessing of PSAP." evidence="10">
    <original>E</original>
    <variation>D</variation>
    <location>
        <position position="795"/>
    </location>
</feature>
<feature type="mutagenesis site" description="Arrests retrograde ERGIC/cis-Golgi-to-ER transport at an early step and causes disassembly of the Golgi and disassociation of COP1 from membranes." evidence="5">
    <original>E</original>
    <variation>K</variation>
    <location>
        <position position="795"/>
    </location>
</feature>
<feature type="mutagenesis site" description="Confers BFA tolerance." evidence="6">
    <original>M</original>
    <variation>L</variation>
    <location>
        <position position="833"/>
    </location>
</feature>
<feature type="mutagenesis site" description="Prevents 2-DG-induced Golgi disassembly." evidence="13">
    <original>T</original>
    <variation>A</variation>
    <location>
        <position position="1338"/>
    </location>
</feature>
<feature type="sequence conflict" description="In Ref. 2; BAA13379." evidence="27" ref="2">
    <original>A</original>
    <variation>S</variation>
    <location>
        <position position="24"/>
    </location>
</feature>
<feature type="sequence conflict" description="In Ref. 4; AK025330." evidence="27" ref="4">
    <original>R</original>
    <variation>C</variation>
    <location>
        <position position="460"/>
    </location>
</feature>
<feature type="sequence conflict" description="In Ref. 6; AAI17682." evidence="27" ref="6">
    <original>R</original>
    <variation>C</variation>
    <location>
        <position position="531"/>
    </location>
</feature>
<feature type="sequence conflict" description="In Ref. 4; AK025330." evidence="27" ref="4">
    <original>Q</original>
    <variation>R</variation>
    <location>
        <position position="1812"/>
    </location>
</feature>
<organism>
    <name type="scientific">Homo sapiens</name>
    <name type="common">Human</name>
    <dbReference type="NCBI Taxonomy" id="9606"/>
    <lineage>
        <taxon>Eukaryota</taxon>
        <taxon>Metazoa</taxon>
        <taxon>Chordata</taxon>
        <taxon>Craniata</taxon>
        <taxon>Vertebrata</taxon>
        <taxon>Euteleostomi</taxon>
        <taxon>Mammalia</taxon>
        <taxon>Eutheria</taxon>
        <taxon>Euarchontoglires</taxon>
        <taxon>Primates</taxon>
        <taxon>Haplorrhini</taxon>
        <taxon>Catarrhini</taxon>
        <taxon>Hominidae</taxon>
        <taxon>Homo</taxon>
    </lineage>
</organism>
<comment type="function">
    <text evidence="1 4 5 6 7 10 11 12 13 15 17 18 19 20 21 22 32 33">Guanine-nucleotide exchange factor (GEF) for members of the Arf family of small GTPases involved in trafficking in the early secretory pathway; its GEF activity initiates the coating of nascent vesicles via the localized generation of activated ARFs through replacement of GDP with GTP. Recruitment to cis-Golgi membranes requires membrane association of Arf-GDP and can be regulated by ARF1, ARF3, ARF4 and ARF5. Involved in the recruitment of the COPI coat complex to the endoplasmic reticulum exit sites (ERES), and the endoplasmic reticulum-Golgi intermediate (ERGIC) and cis-Golgi compartments which implicates ARF1 activation. Involved in COPI vesicle-dependent retrograde transport from the ERGIC and cis-Golgi compartments to the endoplasmic reticulum (ER) (PubMed:12047556, PubMed:12808027, PubMed:16926190, PubMed:17956946, PubMed:18003980, PubMed:19039328, PubMed:24213530). Involved in the trans-Golgi network recruitment of GGA1, GGA2, GGA3, BIG1, BIG2, and the AP-1 adaptor protein complex related to chlathrin-dependent transport; the function requires its GEF activity (probably at least in part on ARF4 and ARF5) (PubMed:23386609). Has GEF activity towards ARF1 (PubMed:15616190). Has in vitro GEF activity towards ARF5 (By similarity). Involved in the processing of PSAP (PubMed:17666033). Required for the assembly of the Golgi apparatus (PubMed:12808027, PubMed:18003980). The AMPK-phosphorylated form is involved in Golgi disassembly during mitotis and under stress conditions (PubMed:18063581, PubMed:23418352). May be involved in the COPI vesicle-dependent recruitment of PNPLA2 to lipid droplets; however, this function is under debate (PubMed:19461073, PubMed:22185782). In neutrophils, involved in G protein-coupled receptor (GPCR)-mediated chemotaxis und superoxide production. Proposed to be recruited by phosphatidylinositol-phosphates generated upon GPCR stimulation to the leading edge where it recruits and activates ARF1, and is involved in recruitment of GIT2 and the NADPH oxidase complex (PubMed:22573891). Plays a role in maintaining mitochondrial morphology (PubMed:25190516).</text>
</comment>
<comment type="activity regulation">
    <text evidence="1 6">Inhibited by brefeldin A (BFA) (PubMed:15616190). Inhibited by golgicide A (GCA) (By similarity).</text>
</comment>
<comment type="subunit">
    <text evidence="6 9 10 11 14 16 23 28 31">Can form homodimers and probably homotetramers (PubMed:17640864). Interacts with COPG1; the interaction is independent of ARF1 activation (PubMed:19039328). Interacts with ARF1, ARF3, ARF4 and ARF5 (PubMed:15616190, PubMed:17956946). Interacts with RAB1B (GTP-bound form); required for GBF1 membrane association (PubMed:17429068). Interacts with GGA1, GGA2 and GGA3 (PubMed:17666033). Interacts with USO1 (PubMed:12634853). Interacts (via SEC7 domain) with PNPLA2 (via C-terminus); the interaction is direct (PubMed:21789191). Interacts with ARMH3 (PubMed:31519766).</text>
</comment>
<comment type="subunit">
    <text evidence="8">(Microbial infection) Interacts with poliovirus protein 3A.</text>
</comment>
<comment type="interaction">
    <interactant intactId="EBI-359050">
        <id>Q92538</id>
    </interactant>
    <interactant intactId="EBI-21497244">
        <id>P09613</id>
        <label>GP</label>
    </interactant>
    <organismsDiffer>true</organismsDiffer>
    <experiments>2</experiments>
</comment>
<comment type="interaction">
    <interactant intactId="EBI-359050">
        <id>Q92538</id>
    </interactant>
    <interactant intactId="EBI-21242141">
        <id>PRO_0000424692</id>
        <dbReference type="UniProtKB" id="P03300"/>
    </interactant>
    <organismsDiffer>true</organismsDiffer>
    <experiments>8</experiments>
</comment>
<comment type="interaction">
    <interactant intactId="EBI-50735278">
        <id>Q92538-1</id>
    </interactant>
    <interactant intactId="EBI-8511600">
        <id>P53620</id>
        <label>COPG1</label>
    </interactant>
    <organismsDiffer>true</organismsDiffer>
    <experiments>2</experiments>
</comment>
<comment type="interaction">
    <interactant intactId="EBI-17724521">
        <id>Q92538-3</id>
    </interactant>
    <interactant intactId="EBI-1811414">
        <id>Q9C0D3</id>
        <label>ZYG11B</label>
    </interactant>
    <organismsDiffer>false</organismsDiffer>
    <experiments>3</experiments>
</comment>
<comment type="subcellular location">
    <subcellularLocation>
        <location evidence="4 5 6">Golgi apparatus</location>
        <location evidence="4 5 6">cis-Golgi network</location>
    </subcellularLocation>
    <subcellularLocation>
        <location evidence="5">Endoplasmic reticulum-Golgi intermediate compartment</location>
    </subcellularLocation>
    <subcellularLocation>
        <location evidence="19">Golgi apparatus</location>
        <location evidence="19">trans-Golgi network</location>
    </subcellularLocation>
    <subcellularLocation>
        <location evidence="23">Golgi apparatus</location>
    </subcellularLocation>
    <subcellularLocation>
        <location evidence="18 23">Cytoplasm</location>
    </subcellularLocation>
    <subcellularLocation>
        <location evidence="16">Lipid droplet</location>
    </subcellularLocation>
    <subcellularLocation>
        <location>Membrane</location>
        <topology evidence="27">Peripheral membrane protein</topology>
    </subcellularLocation>
    <text evidence="6 17 18 29 30">Cycles rapidly on and off early Golgi membranes (PubMed:15616190). Stabilized on membranes when complexed with ARF1-GDP and is released from both ARF1 and membranes after it catalyzes GDP displacement and ARF1 binds GTP. Continuous cycles of recruitment and dissociation of GBF1 to membranes are required for sustained ARF activation and COP I recruitment (PubMed:15813748). In neutrophils is translocated from the Golgi to the leading edge upon GPCR stimulation (PubMed:22573891). Localization to lipid droplets is questionable (PubMed:22185782).</text>
</comment>
<comment type="alternative products">
    <event type="alternative splicing"/>
    <isoform>
        <id>Q92538-4</id>
        <name>1</name>
        <sequence type="displayed"/>
    </isoform>
    <isoform>
        <id>Q92538-1</id>
        <name>4</name>
        <sequence type="described" ref="VSP_062172"/>
    </isoform>
    <isoform>
        <id>Q92538-2</id>
        <name>2</name>
        <sequence type="described" ref="VSP_057523"/>
    </isoform>
    <isoform>
        <id>Q92538-3</id>
        <name>3</name>
        <sequence type="described" ref="VSP_062172 VSP_057523"/>
    </isoform>
</comment>
<comment type="tissue specificity">
    <text>Ubiquitous.</text>
</comment>
<comment type="domain">
    <text evidence="1">The DCB (dimerization and cyclophilin-binding) and HUS (homology upstream of Sec7) domains are necessary for dimerization. The DCB domain is proposed to support constitutive homodimerization; the HUS domain interacts with the DCB domain which may occur intramolecular or intermolecular (By similarity).</text>
</comment>
<comment type="PTM">
    <text evidence="13 20">AMPK-mediated phosphorylation at Thr-1338 is induced by 2-deoxyglucose (2-DG) and AICA ribonucleotide, and occurs during mitosis leading to membrane disassociation and inactivation of ARF1 during mitosis.</text>
</comment>
<comment type="disease" evidence="24">
    <disease id="DI-06681">
        <name>Charcot-Marie-Tooth disease, axonal, type 2GG</name>
        <acronym>CMT2GG</acronym>
        <description>An axonal form of Charcot-Marie-Tooth disease, a disorder of the peripheral nervous system, characterized by progressive weakness and atrophy, initially of the peroneal muscles and later of the distal muscles of the arms. Charcot-Marie-Tooth disease is classified in two main groups on the basis of electrophysiologic properties and histopathology: primary peripheral demyelinating neuropathies (designated CMT1 when they are dominantly inherited) and primary peripheral axonal neuropathies (CMT2). Neuropathies of the CMT2 group are characterized by signs of axonal degeneration in the absence of obvious myelin alterations, normal or slightly reduced nerve conduction velocities, and progressive distal muscle weakness and atrophy. CMT2GG is an autosomal dominant form characterized by slowly progressive distal muscle weakness and atrophy primarily affecting the lower limbs and causing difficulty walking. Some individuals may also have involvement of the hands.</description>
        <dbReference type="MIM" id="606483"/>
    </disease>
    <text>The disease is caused by variants affecting the gene represented in this entry.</text>
</comment>
<comment type="sequence caution" evidence="27">
    <conflict type="erroneous initiation">
        <sequence resource="EMBL-CDS" id="BAA13379"/>
    </conflict>
</comment>
<protein>
    <recommendedName>
        <fullName>Golgi-specific brefeldin A-resistance guanine nucleotide exchange factor 1</fullName>
        <shortName>BFA-resistant GEF 1</shortName>
    </recommendedName>
</protein>
<name>GBF1_HUMAN</name>